<proteinExistence type="evidence at transcript level"/>
<name>CARP_ASPFU</name>
<accession>O42630</accession>
<accession>Q4WY12</accession>
<reference key="1">
    <citation type="journal article" date="2000" name="Int. J. Med. Microbiol.">
        <title>Molecular cloning and targeted deletion of PEP2 which encodes a novel aspartic proteinase from Aspergillus fumigatus.</title>
        <authorList>
            <person name="Reichard U."/>
            <person name="Cole G.T."/>
            <person name="Ruechel R."/>
            <person name="Monod M."/>
        </authorList>
    </citation>
    <scope>NUCLEOTIDE SEQUENCE [GENOMIC DNA / MRNA]</scope>
    <scope>SUBCELLULAR LOCATION</scope>
    <scope>FUNCTION</scope>
    <source>
        <strain>D141</strain>
    </source>
</reference>
<reference key="2">
    <citation type="journal article" date="2005" name="Nature">
        <title>Genomic sequence of the pathogenic and allergenic filamentous fungus Aspergillus fumigatus.</title>
        <authorList>
            <person name="Nierman W.C."/>
            <person name="Pain A."/>
            <person name="Anderson M.J."/>
            <person name="Wortman J.R."/>
            <person name="Kim H.S."/>
            <person name="Arroyo J."/>
            <person name="Berriman M."/>
            <person name="Abe K."/>
            <person name="Archer D.B."/>
            <person name="Bermejo C."/>
            <person name="Bennett J.W."/>
            <person name="Bowyer P."/>
            <person name="Chen D."/>
            <person name="Collins M."/>
            <person name="Coulsen R."/>
            <person name="Davies R."/>
            <person name="Dyer P.S."/>
            <person name="Farman M.L."/>
            <person name="Fedorova N."/>
            <person name="Fedorova N.D."/>
            <person name="Feldblyum T.V."/>
            <person name="Fischer R."/>
            <person name="Fosker N."/>
            <person name="Fraser A."/>
            <person name="Garcia J.L."/>
            <person name="Garcia M.J."/>
            <person name="Goble A."/>
            <person name="Goldman G.H."/>
            <person name="Gomi K."/>
            <person name="Griffith-Jones S."/>
            <person name="Gwilliam R."/>
            <person name="Haas B.J."/>
            <person name="Haas H."/>
            <person name="Harris D.E."/>
            <person name="Horiuchi H."/>
            <person name="Huang J."/>
            <person name="Humphray S."/>
            <person name="Jimenez J."/>
            <person name="Keller N."/>
            <person name="Khouri H."/>
            <person name="Kitamoto K."/>
            <person name="Kobayashi T."/>
            <person name="Konzack S."/>
            <person name="Kulkarni R."/>
            <person name="Kumagai T."/>
            <person name="Lafton A."/>
            <person name="Latge J.-P."/>
            <person name="Li W."/>
            <person name="Lord A."/>
            <person name="Lu C."/>
            <person name="Majoros W.H."/>
            <person name="May G.S."/>
            <person name="Miller B.L."/>
            <person name="Mohamoud Y."/>
            <person name="Molina M."/>
            <person name="Monod M."/>
            <person name="Mouyna I."/>
            <person name="Mulligan S."/>
            <person name="Murphy L.D."/>
            <person name="O'Neil S."/>
            <person name="Paulsen I."/>
            <person name="Penalva M.A."/>
            <person name="Pertea M."/>
            <person name="Price C."/>
            <person name="Pritchard B.L."/>
            <person name="Quail M.A."/>
            <person name="Rabbinowitsch E."/>
            <person name="Rawlins N."/>
            <person name="Rajandream M.A."/>
            <person name="Reichard U."/>
            <person name="Renauld H."/>
            <person name="Robson G.D."/>
            <person name="Rodriguez de Cordoba S."/>
            <person name="Rodriguez-Pena J.M."/>
            <person name="Ronning C.M."/>
            <person name="Rutter S."/>
            <person name="Salzberg S.L."/>
            <person name="Sanchez M."/>
            <person name="Sanchez-Ferrero J.C."/>
            <person name="Saunders D."/>
            <person name="Seeger K."/>
            <person name="Squares R."/>
            <person name="Squares S."/>
            <person name="Takeuchi M."/>
            <person name="Tekaia F."/>
            <person name="Turner G."/>
            <person name="Vazquez de Aldana C.R."/>
            <person name="Weidman J."/>
            <person name="White O."/>
            <person name="Woodward J.R."/>
            <person name="Yu J.-H."/>
            <person name="Fraser C.M."/>
            <person name="Galagan J.E."/>
            <person name="Asai K."/>
            <person name="Machida M."/>
            <person name="Hall N."/>
            <person name="Barrell B.G."/>
            <person name="Denning D.W."/>
        </authorList>
    </citation>
    <scope>NUCLEOTIDE SEQUENCE [LARGE SCALE GENOMIC DNA]</scope>
    <source>
        <strain>ATCC MYA-4609 / CBS 101355 / FGSC A1100 / Af293</strain>
    </source>
</reference>
<reference key="3">
    <citation type="journal article" date="2005" name="Rev. Iberoam. Micol.">
        <title>Genes and molecules involved in Aspergillus fumigatus virulence.</title>
        <authorList>
            <person name="Rementeria A."/>
            <person name="Lopez-Molina N."/>
            <person name="Ludwig A."/>
            <person name="Vivanco A.B."/>
            <person name="Bikandi J."/>
            <person name="Ponton J."/>
            <person name="Garaizar J."/>
        </authorList>
    </citation>
    <scope>VIRULENCE FACTOR</scope>
</reference>
<comment type="function">
    <text evidence="5">Vacuolar aspartic endopeptidase which is probably also secreted and contributes to virulence.</text>
</comment>
<comment type="catalytic activity">
    <reaction>
        <text>Hydrolysis of proteins with broad specificity for peptide bonds. Cleaves -Leu-Leu-|-Val-Tyr- bond in a synthetic substrate. Does not act on esters of Tyr or Arg.</text>
        <dbReference type="EC" id="3.4.23.25"/>
    </reaction>
</comment>
<comment type="subcellular location">
    <subcellularLocation>
        <location evidence="5">Vacuole lumen</location>
    </subcellularLocation>
    <subcellularLocation>
        <location evidence="7">Secreted</location>
    </subcellularLocation>
</comment>
<comment type="similarity">
    <text evidence="6">Belongs to the peptidase A1 family.</text>
</comment>
<organism>
    <name type="scientific">Aspergillus fumigatus (strain ATCC MYA-4609 / CBS 101355 / FGSC A1100 / Af293)</name>
    <name type="common">Neosartorya fumigata</name>
    <dbReference type="NCBI Taxonomy" id="330879"/>
    <lineage>
        <taxon>Eukaryota</taxon>
        <taxon>Fungi</taxon>
        <taxon>Dikarya</taxon>
        <taxon>Ascomycota</taxon>
        <taxon>Pezizomycotina</taxon>
        <taxon>Eurotiomycetes</taxon>
        <taxon>Eurotiomycetidae</taxon>
        <taxon>Eurotiales</taxon>
        <taxon>Aspergillaceae</taxon>
        <taxon>Aspergillus</taxon>
        <taxon>Aspergillus subgen. Fumigati</taxon>
    </lineage>
</organism>
<keyword id="KW-0064">Aspartyl protease</keyword>
<keyword id="KW-1015">Disulfide bond</keyword>
<keyword id="KW-0325">Glycoprotein</keyword>
<keyword id="KW-0378">Hydrolase</keyword>
<keyword id="KW-0645">Protease</keyword>
<keyword id="KW-1185">Reference proteome</keyword>
<keyword id="KW-0964">Secreted</keyword>
<keyword id="KW-0732">Signal</keyword>
<keyword id="KW-0926">Vacuole</keyword>
<keyword id="KW-0843">Virulence</keyword>
<keyword id="KW-0865">Zymogen</keyword>
<protein>
    <recommendedName>
        <fullName>Vacuolar protease A</fullName>
        <ecNumber>3.4.23.25</ecNumber>
    </recommendedName>
    <alternativeName>
        <fullName>Aspartic endopeptidase pep2</fullName>
    </alternativeName>
    <alternativeName>
        <fullName>Aspartic protease pep2</fullName>
    </alternativeName>
</protein>
<gene>
    <name type="primary">pep2</name>
    <name type="ORF">AFUA_3G11400</name>
</gene>
<feature type="signal peptide">
    <location>
        <begin position="1"/>
        <end position="18"/>
    </location>
</feature>
<feature type="propeptide" id="PRO_5000147257" description="Activation peptide">
    <location>
        <begin position="19"/>
        <end position="70"/>
    </location>
</feature>
<feature type="chain" id="PRO_5000147258" description="Vacuolar protease A">
    <location>
        <begin position="71"/>
        <end position="398"/>
    </location>
</feature>
<feature type="domain" description="Peptidase A1" evidence="3">
    <location>
        <begin position="85"/>
        <end position="395"/>
    </location>
</feature>
<feature type="active site" evidence="4">
    <location>
        <position position="103"/>
    </location>
</feature>
<feature type="active site" evidence="4">
    <location>
        <position position="287"/>
    </location>
</feature>
<feature type="glycosylation site" description="N-linked (GlcNAc...) asparagine" evidence="2">
    <location>
        <position position="138"/>
    </location>
</feature>
<feature type="glycosylation site" description="N-linked (GlcNAc...) asparagine" evidence="2">
    <location>
        <position position="338"/>
    </location>
</feature>
<feature type="disulfide bond" evidence="1">
    <location>
        <begin position="116"/>
        <end position="121"/>
    </location>
</feature>
<feature type="disulfide bond" evidence="1">
    <location>
        <begin position="321"/>
        <end position="354"/>
    </location>
</feature>
<evidence type="ECO:0000250" key="1"/>
<evidence type="ECO:0000255" key="2"/>
<evidence type="ECO:0000255" key="3">
    <source>
        <dbReference type="PROSITE-ProRule" id="PRU01103"/>
    </source>
</evidence>
<evidence type="ECO:0000255" key="4">
    <source>
        <dbReference type="PROSITE-ProRule" id="PRU10094"/>
    </source>
</evidence>
<evidence type="ECO:0000269" key="5">
    <source>
    </source>
</evidence>
<evidence type="ECO:0000305" key="6"/>
<evidence type="ECO:0000305" key="7">
    <source>
    </source>
</evidence>
<dbReference type="EC" id="3.4.23.25"/>
<dbReference type="EMBL" id="AJ132504">
    <property type="protein sequence ID" value="CAA10674.1"/>
    <property type="molecule type" value="Genomic_DNA"/>
</dbReference>
<dbReference type="EMBL" id="Y15744">
    <property type="protein sequence ID" value="CAA75754.1"/>
    <property type="molecule type" value="mRNA"/>
</dbReference>
<dbReference type="EMBL" id="AAHF01000002">
    <property type="protein sequence ID" value="EAL92441.1"/>
    <property type="molecule type" value="Genomic_DNA"/>
</dbReference>
<dbReference type="RefSeq" id="XP_754479.1">
    <property type="nucleotide sequence ID" value="XM_749386.1"/>
</dbReference>
<dbReference type="SMR" id="O42630"/>
<dbReference type="FunCoup" id="O42630">
    <property type="interactions" value="400"/>
</dbReference>
<dbReference type="STRING" id="330879.O42630"/>
<dbReference type="MEROPS" id="A01.018"/>
<dbReference type="GlyCosmos" id="O42630">
    <property type="glycosylation" value="2 sites, No reported glycans"/>
</dbReference>
<dbReference type="EnsemblFungi" id="EAL92441">
    <property type="protein sequence ID" value="EAL92441"/>
    <property type="gene ID" value="AFUA_3G11400"/>
</dbReference>
<dbReference type="GeneID" id="3512540"/>
<dbReference type="KEGG" id="afm:AFUA_3G11400"/>
<dbReference type="VEuPathDB" id="FungiDB:Afu3g11400"/>
<dbReference type="eggNOG" id="KOG1339">
    <property type="taxonomic scope" value="Eukaryota"/>
</dbReference>
<dbReference type="HOGENOM" id="CLU_013253_3_4_1"/>
<dbReference type="InParanoid" id="O42630"/>
<dbReference type="OMA" id="KYDHDAS"/>
<dbReference type="OrthoDB" id="771136at2759"/>
<dbReference type="Proteomes" id="UP000002530">
    <property type="component" value="Chromosome 3"/>
</dbReference>
<dbReference type="GO" id="GO:0005576">
    <property type="term" value="C:extracellular region"/>
    <property type="evidence" value="ECO:0007669"/>
    <property type="project" value="UniProtKB-SubCell"/>
</dbReference>
<dbReference type="GO" id="GO:0000324">
    <property type="term" value="C:fungal-type vacuole"/>
    <property type="evidence" value="ECO:0000318"/>
    <property type="project" value="GO_Central"/>
</dbReference>
<dbReference type="GO" id="GO:0005775">
    <property type="term" value="C:vacuolar lumen"/>
    <property type="evidence" value="ECO:0007669"/>
    <property type="project" value="UniProtKB-SubCell"/>
</dbReference>
<dbReference type="GO" id="GO:0004190">
    <property type="term" value="F:aspartic-type endopeptidase activity"/>
    <property type="evidence" value="ECO:0000318"/>
    <property type="project" value="GO_Central"/>
</dbReference>
<dbReference type="GO" id="GO:0006508">
    <property type="term" value="P:proteolysis"/>
    <property type="evidence" value="ECO:0000318"/>
    <property type="project" value="GO_Central"/>
</dbReference>
<dbReference type="CDD" id="cd05488">
    <property type="entry name" value="Proteinase_A_fungi"/>
    <property type="match status" value="1"/>
</dbReference>
<dbReference type="FunFam" id="2.40.70.10:FF:000036">
    <property type="entry name" value="Vacuolar aspartic protease"/>
    <property type="match status" value="1"/>
</dbReference>
<dbReference type="FunFam" id="2.40.70.10:FF:000002">
    <property type="entry name" value="Vacuolar aspartic proteinase"/>
    <property type="match status" value="1"/>
</dbReference>
<dbReference type="Gene3D" id="2.40.70.10">
    <property type="entry name" value="Acid Proteases"/>
    <property type="match status" value="2"/>
</dbReference>
<dbReference type="InterPro" id="IPR001461">
    <property type="entry name" value="Aspartic_peptidase_A1"/>
</dbReference>
<dbReference type="InterPro" id="IPR001969">
    <property type="entry name" value="Aspartic_peptidase_AS"/>
</dbReference>
<dbReference type="InterPro" id="IPR033121">
    <property type="entry name" value="PEPTIDASE_A1"/>
</dbReference>
<dbReference type="InterPro" id="IPR021109">
    <property type="entry name" value="Peptidase_aspartic_dom_sf"/>
</dbReference>
<dbReference type="InterPro" id="IPR033819">
    <property type="entry name" value="Saccharopepsin"/>
</dbReference>
<dbReference type="PANTHER" id="PTHR47966">
    <property type="entry name" value="BETA-SITE APP-CLEAVING ENZYME, ISOFORM A-RELATED"/>
    <property type="match status" value="1"/>
</dbReference>
<dbReference type="PANTHER" id="PTHR47966:SF51">
    <property type="entry name" value="BETA-SITE APP-CLEAVING ENZYME, ISOFORM A-RELATED"/>
    <property type="match status" value="1"/>
</dbReference>
<dbReference type="Pfam" id="PF00026">
    <property type="entry name" value="Asp"/>
    <property type="match status" value="1"/>
</dbReference>
<dbReference type="PRINTS" id="PR00792">
    <property type="entry name" value="PEPSIN"/>
</dbReference>
<dbReference type="SUPFAM" id="SSF50630">
    <property type="entry name" value="Acid proteases"/>
    <property type="match status" value="1"/>
</dbReference>
<dbReference type="PROSITE" id="PS00141">
    <property type="entry name" value="ASP_PROTEASE"/>
    <property type="match status" value="2"/>
</dbReference>
<dbReference type="PROSITE" id="PS51767">
    <property type="entry name" value="PEPTIDASE_A1"/>
    <property type="match status" value="1"/>
</dbReference>
<sequence length="398" mass="43355">MKSTSLLTASVLLGSASAAVHKLKLNKVPLDEQLYTHNIDAHVRALGQKYMGIRPNVHQELLEENSLNDMSRHDVLVDNFLNAQYFSEISLGTPPQKFKVVLDTGSSNLWVPGSDCSSIACFLHNKYDSSASSTYKANGTEFAIKYGSGELSGFVSQDTLQIGDLKVVKQDFAEATNEPGLAFAFGRFDGILGLGYDTISVNKIVPPFYNMLDQGLLDEPVFAFYLGDTNKEGDNSEASFGGVDKNHYTGELTKIPLRRKAYWEVDFDAIALGDNVAELENTGIILDTGTSLIALPSTLADLLNKEIGAKKGFTGQYSIECDKRDSLPDLTFTLAGHNFTIGPYDYTLEVQGSCISSFMGMDFPEPVGPLAILGDAFLRKWYSVYDLGNNAVGLAKAK</sequence>